<accession>Q66HC1</accession>
<evidence type="ECO:0000250" key="1"/>
<evidence type="ECO:0000250" key="2">
    <source>
        <dbReference type="UniProtKB" id="Q9H7E2"/>
    </source>
</evidence>
<evidence type="ECO:0000255" key="3">
    <source>
        <dbReference type="PROSITE-ProRule" id="PRU00211"/>
    </source>
</evidence>
<evidence type="ECO:0000255" key="4">
    <source>
        <dbReference type="PROSITE-ProRule" id="PRU00212"/>
    </source>
</evidence>
<evidence type="ECO:0000256" key="5">
    <source>
        <dbReference type="SAM" id="MobiDB-lite"/>
    </source>
</evidence>
<evidence type="ECO:0007744" key="6">
    <source>
    </source>
</evidence>
<organism>
    <name type="scientific">Rattus norvegicus</name>
    <name type="common">Rat</name>
    <dbReference type="NCBI Taxonomy" id="10116"/>
    <lineage>
        <taxon>Eukaryota</taxon>
        <taxon>Metazoa</taxon>
        <taxon>Chordata</taxon>
        <taxon>Craniata</taxon>
        <taxon>Vertebrata</taxon>
        <taxon>Euteleostomi</taxon>
        <taxon>Mammalia</taxon>
        <taxon>Eutheria</taxon>
        <taxon>Euarchontoglires</taxon>
        <taxon>Glires</taxon>
        <taxon>Rodentia</taxon>
        <taxon>Myomorpha</taxon>
        <taxon>Muroidea</taxon>
        <taxon>Muridae</taxon>
        <taxon>Murinae</taxon>
        <taxon>Rattus</taxon>
    </lineage>
</organism>
<proteinExistence type="evidence at protein level"/>
<feature type="chain" id="PRO_0000342365" description="Tudor domain-containing protein 3">
    <location>
        <begin position="1"/>
        <end position="651"/>
    </location>
</feature>
<feature type="domain" description="UBA" evidence="4">
    <location>
        <begin position="193"/>
        <end position="233"/>
    </location>
</feature>
<feature type="domain" description="Tudor" evidence="3">
    <location>
        <begin position="555"/>
        <end position="615"/>
    </location>
</feature>
<feature type="region of interest" description="Disordered" evidence="5">
    <location>
        <begin position="147"/>
        <end position="189"/>
    </location>
</feature>
<feature type="region of interest" description="Disordered" evidence="5">
    <location>
        <begin position="234"/>
        <end position="272"/>
    </location>
</feature>
<feature type="region of interest" description="Disordered" evidence="5">
    <location>
        <begin position="306"/>
        <end position="371"/>
    </location>
</feature>
<feature type="region of interest" description="Disordered" evidence="5">
    <location>
        <begin position="384"/>
        <end position="459"/>
    </location>
</feature>
<feature type="region of interest" description="Disordered" evidence="5">
    <location>
        <begin position="624"/>
        <end position="651"/>
    </location>
</feature>
<feature type="region of interest" description="EBM motif; may mediate interaction with the EJC" evidence="1">
    <location>
        <begin position="631"/>
        <end position="651"/>
    </location>
</feature>
<feature type="compositionally biased region" description="Basic and acidic residues" evidence="5">
    <location>
        <begin position="169"/>
        <end position="189"/>
    </location>
</feature>
<feature type="compositionally biased region" description="Basic and acidic residues" evidence="5">
    <location>
        <begin position="321"/>
        <end position="338"/>
    </location>
</feature>
<feature type="compositionally biased region" description="Polar residues" evidence="5">
    <location>
        <begin position="339"/>
        <end position="352"/>
    </location>
</feature>
<feature type="compositionally biased region" description="Basic and acidic residues" evidence="5">
    <location>
        <begin position="624"/>
        <end position="633"/>
    </location>
</feature>
<feature type="modified residue" description="Phosphoserine" evidence="6">
    <location>
        <position position="256"/>
    </location>
</feature>
<feature type="modified residue" description="Phosphoserine" evidence="2">
    <location>
        <position position="345"/>
    </location>
</feature>
<feature type="cross-link" description="Glycyl lysine isopeptide (Lys-Gly) (interchain with G-Cter in SUMO2)" evidence="2">
    <location>
        <position position="470"/>
    </location>
</feature>
<comment type="function">
    <text evidence="2">Scaffolding protein that specifically recognizes and binds dimethylarginine-containing proteins. Plays a role in the regulation of translation of target mRNAs by binding Arg/Gly-rich motifs (GAR) in dimethylarginine-containing proteins. In nucleus, acts as a coactivator: recognizes and binds asymmetric dimethylation on the core histone tails associated with transcriptional activation (H3R17me2a and H4R3me2a) and recruits proteins at these arginine-methylated loci. In cytoplasm, acts as an antiviral factor that participates in the assembly of stress granules together with G3BP1.</text>
</comment>
<comment type="subunit">
    <text evidence="2">Component of mRNA stress granules. Interacts with FMR1, FXR1, FXR2, EWSR1, FUS, SERBP1, EEF1A1 and DDX3X or DDX3Y, and with the small nuclear ribonucleoprotein-associated proteins SNRPB and SNRPN. Interacts with 'Lys-48'-linked tetra-ubiquitin, but not with monoubiquitin or 'Lys-63'-linked ubiquitin chains. May interact with the exon junction complex (EJC) composed at least of CASC3, EIF4A3, MAGOH and RBM8A. Interacts with POLR2A (via the C-terminal domain (CTD)).</text>
</comment>
<comment type="subcellular location">
    <subcellularLocation>
        <location evidence="2">Cytoplasm</location>
    </subcellularLocation>
    <subcellularLocation>
        <location evidence="2">Nucleus</location>
    </subcellularLocation>
    <text evidence="2">Predominantly cytoplasmic. Associated with actively translating polyribosomes. Component of stress granules.</text>
</comment>
<comment type="domain">
    <text evidence="1">The Tudor domain specifically recognizes and binds asymmetric dimethylation of histone H3 'Arg-17' (H3R17me2a) and histones H4 'Arg-3', 2 tags for epigenetic transcriptional activation.</text>
</comment>
<dbReference type="EMBL" id="BC081929">
    <property type="protein sequence ID" value="AAH81929.1"/>
    <property type="molecule type" value="mRNA"/>
</dbReference>
<dbReference type="RefSeq" id="NP_001012043.1">
    <property type="nucleotide sequence ID" value="NM_001012043.2"/>
</dbReference>
<dbReference type="RefSeq" id="NP_001418405.1">
    <property type="nucleotide sequence ID" value="NM_001431476.1"/>
</dbReference>
<dbReference type="SMR" id="Q66HC1"/>
<dbReference type="BioGRID" id="258345">
    <property type="interactions" value="1"/>
</dbReference>
<dbReference type="FunCoup" id="Q66HC1">
    <property type="interactions" value="3250"/>
</dbReference>
<dbReference type="STRING" id="10116.ENSRNOP00000012440"/>
<dbReference type="iPTMnet" id="Q66HC1"/>
<dbReference type="PhosphoSitePlus" id="Q66HC1"/>
<dbReference type="PaxDb" id="10116-ENSRNOP00000012440"/>
<dbReference type="Ensembl" id="ENSRNOT00000117994.1">
    <property type="protein sequence ID" value="ENSRNOP00000077267.1"/>
    <property type="gene ID" value="ENSRNOG00000009034.8"/>
</dbReference>
<dbReference type="GeneID" id="306066"/>
<dbReference type="KEGG" id="rno:306066"/>
<dbReference type="UCSC" id="RGD:1310126">
    <property type="organism name" value="rat"/>
</dbReference>
<dbReference type="AGR" id="RGD:1310126"/>
<dbReference type="CTD" id="81550"/>
<dbReference type="RGD" id="1310126">
    <property type="gene designation" value="Tdrd3"/>
</dbReference>
<dbReference type="eggNOG" id="KOG3683">
    <property type="taxonomic scope" value="Eukaryota"/>
</dbReference>
<dbReference type="GeneTree" id="ENSGT00940000155487"/>
<dbReference type="InParanoid" id="Q66HC1"/>
<dbReference type="PhylomeDB" id="Q66HC1"/>
<dbReference type="PRO" id="PR:Q66HC1"/>
<dbReference type="Proteomes" id="UP000002494">
    <property type="component" value="Chromosome 15"/>
</dbReference>
<dbReference type="GO" id="GO:0005829">
    <property type="term" value="C:cytosol"/>
    <property type="evidence" value="ECO:0007669"/>
    <property type="project" value="Ensembl"/>
</dbReference>
<dbReference type="GO" id="GO:0035145">
    <property type="term" value="C:exon-exon junction complex"/>
    <property type="evidence" value="ECO:0000266"/>
    <property type="project" value="RGD"/>
</dbReference>
<dbReference type="GO" id="GO:0005794">
    <property type="term" value="C:Golgi apparatus"/>
    <property type="evidence" value="ECO:0007669"/>
    <property type="project" value="Ensembl"/>
</dbReference>
<dbReference type="GO" id="GO:0005654">
    <property type="term" value="C:nucleoplasm"/>
    <property type="evidence" value="ECO:0007669"/>
    <property type="project" value="Ensembl"/>
</dbReference>
<dbReference type="GO" id="GO:0005634">
    <property type="term" value="C:nucleus"/>
    <property type="evidence" value="ECO:0000250"/>
    <property type="project" value="UniProtKB"/>
</dbReference>
<dbReference type="GO" id="GO:0003682">
    <property type="term" value="F:chromatin binding"/>
    <property type="evidence" value="ECO:0000250"/>
    <property type="project" value="UniProtKB"/>
</dbReference>
<dbReference type="GO" id="GO:0140006">
    <property type="term" value="F:histone H3 reader activity"/>
    <property type="evidence" value="ECO:0000250"/>
    <property type="project" value="UniProtKB"/>
</dbReference>
<dbReference type="GO" id="GO:0140008">
    <property type="term" value="F:histone H4 reader activity"/>
    <property type="evidence" value="ECO:0007669"/>
    <property type="project" value="Ensembl"/>
</dbReference>
<dbReference type="GO" id="GO:0035064">
    <property type="term" value="F:methylated histone binding"/>
    <property type="evidence" value="ECO:0000266"/>
    <property type="project" value="RGD"/>
</dbReference>
<dbReference type="GO" id="GO:0003713">
    <property type="term" value="F:transcription coactivator activity"/>
    <property type="evidence" value="ECO:0000250"/>
    <property type="project" value="UniProtKB"/>
</dbReference>
<dbReference type="CDD" id="cd20413">
    <property type="entry name" value="Tudor_TDRD3"/>
    <property type="match status" value="1"/>
</dbReference>
<dbReference type="CDD" id="cd14282">
    <property type="entry name" value="UBA_TDRD3"/>
    <property type="match status" value="1"/>
</dbReference>
<dbReference type="FunFam" id="1.10.8.10:FF:000038">
    <property type="entry name" value="tudor domain-containing protein 3 isoform X1"/>
    <property type="match status" value="1"/>
</dbReference>
<dbReference type="FunFam" id="2.30.30.140:FF:000046">
    <property type="entry name" value="tudor domain-containing protein 3 isoform X1"/>
    <property type="match status" value="1"/>
</dbReference>
<dbReference type="FunFam" id="2.40.50.770:FF:000003">
    <property type="entry name" value="tudor domain-containing protein 3 isoform X2"/>
    <property type="match status" value="1"/>
</dbReference>
<dbReference type="Gene3D" id="2.30.30.140">
    <property type="match status" value="1"/>
</dbReference>
<dbReference type="Gene3D" id="1.10.8.10">
    <property type="entry name" value="DNA helicase RuvA subunit, C-terminal domain"/>
    <property type="match status" value="1"/>
</dbReference>
<dbReference type="Gene3D" id="2.40.50.770">
    <property type="entry name" value="RecQ-mediated genome instability protein Rmi1, C-terminal domain"/>
    <property type="match status" value="1"/>
</dbReference>
<dbReference type="InterPro" id="IPR042470">
    <property type="entry name" value="RMI1_N_C_sf"/>
</dbReference>
<dbReference type="InterPro" id="IPR013894">
    <property type="entry name" value="RMI1_OB"/>
</dbReference>
<dbReference type="InterPro" id="IPR002999">
    <property type="entry name" value="Tudor"/>
</dbReference>
<dbReference type="InterPro" id="IPR047379">
    <property type="entry name" value="Tudor_TDRD3"/>
</dbReference>
<dbReference type="InterPro" id="IPR015940">
    <property type="entry name" value="UBA"/>
</dbReference>
<dbReference type="InterPro" id="IPR009060">
    <property type="entry name" value="UBA-like_sf"/>
</dbReference>
<dbReference type="InterPro" id="IPR041915">
    <property type="entry name" value="UBA_TDRD3"/>
</dbReference>
<dbReference type="PANTHER" id="PTHR13681">
    <property type="entry name" value="SURVIVAL OF MOTOR NEURON-RELATED-SPLICING FACTOR 30-RELATED"/>
    <property type="match status" value="1"/>
</dbReference>
<dbReference type="PANTHER" id="PTHR13681:SF24">
    <property type="entry name" value="TUDOR DOMAIN-CONTAINING PROTEIN 3"/>
    <property type="match status" value="1"/>
</dbReference>
<dbReference type="Pfam" id="PF08585">
    <property type="entry name" value="RMI1_N_C"/>
    <property type="match status" value="1"/>
</dbReference>
<dbReference type="Pfam" id="PF00567">
    <property type="entry name" value="TUDOR"/>
    <property type="match status" value="1"/>
</dbReference>
<dbReference type="Pfam" id="PF22562">
    <property type="entry name" value="UBA_7"/>
    <property type="match status" value="1"/>
</dbReference>
<dbReference type="SMART" id="SM00333">
    <property type="entry name" value="TUDOR"/>
    <property type="match status" value="1"/>
</dbReference>
<dbReference type="SMART" id="SM00165">
    <property type="entry name" value="UBA"/>
    <property type="match status" value="1"/>
</dbReference>
<dbReference type="SUPFAM" id="SSF63748">
    <property type="entry name" value="Tudor/PWWP/MBT"/>
    <property type="match status" value="1"/>
</dbReference>
<dbReference type="SUPFAM" id="SSF46934">
    <property type="entry name" value="UBA-like"/>
    <property type="match status" value="1"/>
</dbReference>
<dbReference type="PROSITE" id="PS50304">
    <property type="entry name" value="TUDOR"/>
    <property type="match status" value="1"/>
</dbReference>
<dbReference type="PROSITE" id="PS50030">
    <property type="entry name" value="UBA"/>
    <property type="match status" value="1"/>
</dbReference>
<gene>
    <name type="primary">Tdrd3</name>
</gene>
<name>TDRD3_RAT</name>
<sequence>MLRVQMTDGHTSCTAVEFSYISKISLNTPPGTKVKLSGTVDIKNGFLLLSDSNTTVLGGEVEHLIDKWALQRSLLKHNRSNIGAEGGPPPFLPFGQKCASTVQVDSRELDRRKTLQVSLPAKPTNDNDEFEKQRTAAIAEVAKSKETKTFGGGGGGVRSHLNIGAGGHRNREVSQKEKASKSESKNEGVYRELVDEKALKHITEMGFSKEASRQALMDNANNLEAALNVLLNSSKQKPVVGPPPRGRGKGRGRVRSEDEEDLGNARPSAPSTLFDFLESKMGTLNMEEPRSQPQHLYQGQHRVSNTEQNGIKDGNQSRHLPRNDPRQPRNEKPPRFQRDTPNLKSALENSVLSRNRGSERPSSSSGSDVWAEERIKCDRPYSRYDRTKDASYPLGFQHNDGAFKRRDNSMQNRSGRGPLYAEAKENPHPSEFVDYNNQKRGKRENQTSNPDHFYDRKSRTMNSEAFSGLKIEKHFSANTDYQNPVQSNSFVGVPNGETDMPMKGRRVGPIKPAGPVTAVPYDDKIFYNSGPKRRSGPIKPEKVIESSIPVEYAKMWKPGDECFALYWEDNKFYRAEVEALHSSGMTAVVKFTDYGNYEEVLLSNIKPVQTEAWEEEGTYDHTIEFRRGGDGQPRRSTRPTQQFYQPPRARN</sequence>
<protein>
    <recommendedName>
        <fullName>Tudor domain-containing protein 3</fullName>
    </recommendedName>
</protein>
<keyword id="KW-0156">Chromatin regulator</keyword>
<keyword id="KW-0963">Cytoplasm</keyword>
<keyword id="KW-1017">Isopeptide bond</keyword>
<keyword id="KW-0539">Nucleus</keyword>
<keyword id="KW-0597">Phosphoprotein</keyword>
<keyword id="KW-1185">Reference proteome</keyword>
<keyword id="KW-0832">Ubl conjugation</keyword>
<reference key="1">
    <citation type="journal article" date="2004" name="Genome Res.">
        <title>The status, quality, and expansion of the NIH full-length cDNA project: the Mammalian Gene Collection (MGC).</title>
        <authorList>
            <consortium name="The MGC Project Team"/>
        </authorList>
    </citation>
    <scope>NUCLEOTIDE SEQUENCE [LARGE SCALE MRNA]</scope>
    <source>
        <tissue>Testis</tissue>
    </source>
</reference>
<reference key="2">
    <citation type="journal article" date="2012" name="Nat. Commun.">
        <title>Quantitative maps of protein phosphorylation sites across 14 different rat organs and tissues.</title>
        <authorList>
            <person name="Lundby A."/>
            <person name="Secher A."/>
            <person name="Lage K."/>
            <person name="Nordsborg N.B."/>
            <person name="Dmytriyev A."/>
            <person name="Lundby C."/>
            <person name="Olsen J.V."/>
        </authorList>
    </citation>
    <scope>PHOSPHORYLATION [LARGE SCALE ANALYSIS] AT SER-256</scope>
    <scope>IDENTIFICATION BY MASS SPECTROMETRY [LARGE SCALE ANALYSIS]</scope>
</reference>